<gene>
    <name type="primary">Adss</name>
</gene>
<evidence type="ECO:0000250" key="1"/>
<evidence type="ECO:0000255" key="2">
    <source>
        <dbReference type="HAMAP-Rule" id="MF_03125"/>
    </source>
</evidence>
<evidence type="ECO:0000269" key="3">
    <source>
    </source>
</evidence>
<evidence type="ECO:0000269" key="4">
    <source>
    </source>
</evidence>
<evidence type="ECO:0000269" key="5">
    <source>
    </source>
</evidence>
<evidence type="ECO:0000269" key="6">
    <source ref="2"/>
</evidence>
<evidence type="ECO:0007829" key="7">
    <source>
        <dbReference type="PDB" id="1P9B"/>
    </source>
</evidence>
<organism>
    <name type="scientific">Plasmodium falciparum</name>
    <dbReference type="NCBI Taxonomy" id="5833"/>
    <lineage>
        <taxon>Eukaryota</taxon>
        <taxon>Sar</taxon>
        <taxon>Alveolata</taxon>
        <taxon>Apicomplexa</taxon>
        <taxon>Aconoidasida</taxon>
        <taxon>Haemosporida</taxon>
        <taxon>Plasmodiidae</taxon>
        <taxon>Plasmodium</taxon>
        <taxon>Plasmodium (Laverania)</taxon>
    </lineage>
</organism>
<dbReference type="EC" id="6.3.4.4" evidence="2"/>
<dbReference type="EMBL" id="AF095282">
    <property type="protein sequence ID" value="AAF06822.2"/>
    <property type="molecule type" value="mRNA"/>
</dbReference>
<dbReference type="PDB" id="1P9B">
    <property type="method" value="X-ray"/>
    <property type="resolution" value="2.00 A"/>
    <property type="chains" value="A=3-442"/>
</dbReference>
<dbReference type="PDBsum" id="1P9B"/>
<dbReference type="SMR" id="Q9U8D3"/>
<dbReference type="DrugBank" id="DB02666">
    <property type="generic name" value="(C8-R)-hydantocidin 5'-phosphate"/>
</dbReference>
<dbReference type="DrugBank" id="DB04460">
    <property type="generic name" value="(C8-S)-Hydantocidin 5'-phosphate"/>
</dbReference>
<dbReference type="DrugBank" id="DB02954">
    <property type="generic name" value="(Carboxyhydroxyamino)Ethanoic Acid"/>
</dbReference>
<dbReference type="DrugBank" id="DB03510">
    <property type="generic name" value="6-O-Phosphoryl Inosine Monophosphate"/>
</dbReference>
<dbReference type="DrugBank" id="DB04315">
    <property type="generic name" value="Guanosine-5'-Diphosphate"/>
</dbReference>
<dbReference type="DrugBank" id="DB02109">
    <property type="generic name" value="Hadacidin"/>
</dbReference>
<dbReference type="DrugBank" id="DB02493">
    <property type="generic name" value="Hydantocidin-5'-phosphate"/>
</dbReference>
<dbReference type="DrugBank" id="DB04566">
    <property type="generic name" value="Inosinic Acid"/>
</dbReference>
<dbReference type="DrugBank" id="DB03345">
    <property type="generic name" value="Mercaptoethanol"/>
</dbReference>
<dbReference type="VEuPathDB" id="PlasmoDB:PF3D7_1354500"/>
<dbReference type="VEuPathDB" id="PlasmoDB:Pf7G8-2_000457000"/>
<dbReference type="VEuPathDB" id="PlasmoDB:Pf7G8_130059100"/>
<dbReference type="VEuPathDB" id="PlasmoDB:PfCD01_130060200"/>
<dbReference type="VEuPathDB" id="PlasmoDB:PfDd2_130060400"/>
<dbReference type="VEuPathDB" id="PlasmoDB:PfGA01_130060700"/>
<dbReference type="VEuPathDB" id="PlasmoDB:PfGB4_130060500"/>
<dbReference type="VEuPathDB" id="PlasmoDB:PfGN01_130061300"/>
<dbReference type="VEuPathDB" id="PlasmoDB:PfHB3_130061000"/>
<dbReference type="VEuPathDB" id="PlasmoDB:PfIT_130059900"/>
<dbReference type="VEuPathDB" id="PlasmoDB:PfKE01_130060200"/>
<dbReference type="VEuPathDB" id="PlasmoDB:PfKH01_130058600"/>
<dbReference type="VEuPathDB" id="PlasmoDB:PfKH02_130057500"/>
<dbReference type="VEuPathDB" id="PlasmoDB:PfML01_130058700"/>
<dbReference type="VEuPathDB" id="PlasmoDB:PfNF135_130058800"/>
<dbReference type="VEuPathDB" id="PlasmoDB:PfNF166_130059500"/>
<dbReference type="VEuPathDB" id="PlasmoDB:PfNF54_130059200"/>
<dbReference type="VEuPathDB" id="PlasmoDB:PfSD01_130061300"/>
<dbReference type="VEuPathDB" id="PlasmoDB:PfSN01_130057600"/>
<dbReference type="VEuPathDB" id="PlasmoDB:PfTG01_130060300"/>
<dbReference type="BRENDA" id="6.3.4.4">
    <property type="organism ID" value="4889"/>
</dbReference>
<dbReference type="UniPathway" id="UPA00075">
    <property type="reaction ID" value="UER00335"/>
</dbReference>
<dbReference type="EvolutionaryTrace" id="Q9U8D3"/>
<dbReference type="GO" id="GO:0005737">
    <property type="term" value="C:cytoplasm"/>
    <property type="evidence" value="ECO:0007669"/>
    <property type="project" value="UniProtKB-SubCell"/>
</dbReference>
<dbReference type="GO" id="GO:0004019">
    <property type="term" value="F:adenylosuccinate synthase activity"/>
    <property type="evidence" value="ECO:0007669"/>
    <property type="project" value="UniProtKB-UniRule"/>
</dbReference>
<dbReference type="GO" id="GO:0005525">
    <property type="term" value="F:GTP binding"/>
    <property type="evidence" value="ECO:0007669"/>
    <property type="project" value="UniProtKB-UniRule"/>
</dbReference>
<dbReference type="GO" id="GO:0000287">
    <property type="term" value="F:magnesium ion binding"/>
    <property type="evidence" value="ECO:0007669"/>
    <property type="project" value="UniProtKB-UniRule"/>
</dbReference>
<dbReference type="GO" id="GO:0044208">
    <property type="term" value="P:'de novo' AMP biosynthetic process"/>
    <property type="evidence" value="ECO:0007669"/>
    <property type="project" value="UniProtKB-UniRule"/>
</dbReference>
<dbReference type="GO" id="GO:0046040">
    <property type="term" value="P:IMP metabolic process"/>
    <property type="evidence" value="ECO:0007669"/>
    <property type="project" value="TreeGrafter"/>
</dbReference>
<dbReference type="CDD" id="cd03108">
    <property type="entry name" value="AdSS"/>
    <property type="match status" value="1"/>
</dbReference>
<dbReference type="FunFam" id="3.90.170.10:FF:000001">
    <property type="entry name" value="Adenylosuccinate synthetase"/>
    <property type="match status" value="1"/>
</dbReference>
<dbReference type="Gene3D" id="3.40.440.10">
    <property type="entry name" value="Adenylosuccinate Synthetase, subunit A, domain 1"/>
    <property type="match status" value="1"/>
</dbReference>
<dbReference type="Gene3D" id="1.10.300.10">
    <property type="entry name" value="Adenylosuccinate Synthetase, subunit A, domain 2"/>
    <property type="match status" value="1"/>
</dbReference>
<dbReference type="Gene3D" id="3.90.170.10">
    <property type="entry name" value="Adenylosuccinate Synthetase, subunit A, domain 3"/>
    <property type="match status" value="1"/>
</dbReference>
<dbReference type="HAMAP" id="MF_00011">
    <property type="entry name" value="Adenylosucc_synth"/>
    <property type="match status" value="1"/>
</dbReference>
<dbReference type="InterPro" id="IPR018220">
    <property type="entry name" value="Adenylosuccin_syn_GTP-bd"/>
</dbReference>
<dbReference type="InterPro" id="IPR033128">
    <property type="entry name" value="Adenylosuccin_syn_Lys_AS"/>
</dbReference>
<dbReference type="InterPro" id="IPR042109">
    <property type="entry name" value="Adenylosuccinate_synth_dom1"/>
</dbReference>
<dbReference type="InterPro" id="IPR042110">
    <property type="entry name" value="Adenylosuccinate_synth_dom2"/>
</dbReference>
<dbReference type="InterPro" id="IPR042111">
    <property type="entry name" value="Adenylosuccinate_synth_dom3"/>
</dbReference>
<dbReference type="InterPro" id="IPR001114">
    <property type="entry name" value="Adenylosuccinate_synthetase"/>
</dbReference>
<dbReference type="InterPro" id="IPR027417">
    <property type="entry name" value="P-loop_NTPase"/>
</dbReference>
<dbReference type="NCBIfam" id="NF002223">
    <property type="entry name" value="PRK01117.1"/>
    <property type="match status" value="1"/>
</dbReference>
<dbReference type="NCBIfam" id="TIGR00184">
    <property type="entry name" value="purA"/>
    <property type="match status" value="1"/>
</dbReference>
<dbReference type="PANTHER" id="PTHR11846">
    <property type="entry name" value="ADENYLOSUCCINATE SYNTHETASE"/>
    <property type="match status" value="1"/>
</dbReference>
<dbReference type="PANTHER" id="PTHR11846:SF0">
    <property type="entry name" value="ADENYLOSUCCINATE SYNTHETASE"/>
    <property type="match status" value="1"/>
</dbReference>
<dbReference type="Pfam" id="PF00709">
    <property type="entry name" value="Adenylsucc_synt"/>
    <property type="match status" value="1"/>
</dbReference>
<dbReference type="SMART" id="SM00788">
    <property type="entry name" value="Adenylsucc_synt"/>
    <property type="match status" value="1"/>
</dbReference>
<dbReference type="SUPFAM" id="SSF52540">
    <property type="entry name" value="P-loop containing nucleoside triphosphate hydrolases"/>
    <property type="match status" value="1"/>
</dbReference>
<dbReference type="PROSITE" id="PS01266">
    <property type="entry name" value="ADENYLOSUCCIN_SYN_1"/>
    <property type="match status" value="1"/>
</dbReference>
<dbReference type="PROSITE" id="PS00513">
    <property type="entry name" value="ADENYLOSUCCIN_SYN_2"/>
    <property type="match status" value="1"/>
</dbReference>
<feature type="chain" id="PRO_0000399294" description="Adenylosuccinate synthetase">
    <location>
        <begin position="1"/>
        <end position="442"/>
    </location>
</feature>
<feature type="active site" description="Proton acceptor" evidence="2">
    <location>
        <position position="26"/>
    </location>
</feature>
<feature type="active site" description="Proton donor" evidence="2">
    <location>
        <position position="54"/>
    </location>
</feature>
<feature type="binding site" evidence="2">
    <location>
        <begin position="25"/>
        <end position="31"/>
    </location>
    <ligand>
        <name>GTP</name>
        <dbReference type="ChEBI" id="CHEBI:37565"/>
    </ligand>
</feature>
<feature type="binding site" description="in other chain" evidence="2">
    <location>
        <begin position="26"/>
        <end position="29"/>
    </location>
    <ligand>
        <name>IMP</name>
        <dbReference type="ChEBI" id="CHEBI:58053"/>
        <note>ligand shared between dimeric partners</note>
    </ligand>
</feature>
<feature type="binding site" evidence="2">
    <location>
        <position position="26"/>
    </location>
    <ligand>
        <name>Mg(2+)</name>
        <dbReference type="ChEBI" id="CHEBI:18420"/>
    </ligand>
</feature>
<feature type="binding site" description="in other chain" evidence="2">
    <location>
        <begin position="51"/>
        <end position="54"/>
    </location>
    <ligand>
        <name>IMP</name>
        <dbReference type="ChEBI" id="CHEBI:58053"/>
        <note>ligand shared between dimeric partners</note>
    </ligand>
</feature>
<feature type="binding site" evidence="2">
    <location>
        <begin position="53"/>
        <end position="55"/>
    </location>
    <ligand>
        <name>GTP</name>
        <dbReference type="ChEBI" id="CHEBI:37565"/>
    </ligand>
</feature>
<feature type="binding site" evidence="2">
    <location>
        <position position="53"/>
    </location>
    <ligand>
        <name>Mg(2+)</name>
        <dbReference type="ChEBI" id="CHEBI:18420"/>
    </ligand>
</feature>
<feature type="binding site" evidence="2">
    <location>
        <position position="62"/>
    </location>
    <ligand>
        <name>GTP</name>
        <dbReference type="ChEBI" id="CHEBI:37565"/>
    </ligand>
</feature>
<feature type="binding site" description="in other chain" evidence="2">
    <location>
        <position position="141"/>
    </location>
    <ligand>
        <name>IMP</name>
        <dbReference type="ChEBI" id="CHEBI:58053"/>
        <note>ligand shared between dimeric partners</note>
    </ligand>
</feature>
<feature type="binding site" evidence="2">
    <location>
        <position position="155"/>
    </location>
    <ligand>
        <name>IMP</name>
        <dbReference type="ChEBI" id="CHEBI:58053"/>
        <note>ligand shared between dimeric partners</note>
    </ligand>
</feature>
<feature type="binding site" description="in other chain" evidence="2">
    <location>
        <position position="232"/>
    </location>
    <ligand>
        <name>IMP</name>
        <dbReference type="ChEBI" id="CHEBI:58053"/>
        <note>ligand shared between dimeric partners</note>
    </ligand>
</feature>
<feature type="binding site" description="in other chain" evidence="2">
    <location>
        <position position="247"/>
    </location>
    <ligand>
        <name>IMP</name>
        <dbReference type="ChEBI" id="CHEBI:58053"/>
        <note>ligand shared between dimeric partners</note>
    </ligand>
</feature>
<feature type="binding site" evidence="2">
    <location>
        <begin position="307"/>
        <end position="313"/>
    </location>
    <ligand>
        <name>substrate</name>
    </ligand>
</feature>
<feature type="binding site" evidence="2">
    <location>
        <position position="307"/>
    </location>
    <ligand>
        <name>GTP</name>
        <dbReference type="ChEBI" id="CHEBI:37565"/>
    </ligand>
</feature>
<feature type="binding site" description="in other chain" evidence="2">
    <location>
        <position position="311"/>
    </location>
    <ligand>
        <name>IMP</name>
        <dbReference type="ChEBI" id="CHEBI:58053"/>
        <note>ligand shared between dimeric partners</note>
    </ligand>
</feature>
<feature type="binding site" evidence="2">
    <location>
        <position position="313"/>
    </location>
    <ligand>
        <name>GTP</name>
        <dbReference type="ChEBI" id="CHEBI:37565"/>
    </ligand>
</feature>
<feature type="binding site" evidence="2">
    <location>
        <begin position="339"/>
        <end position="341"/>
    </location>
    <ligand>
        <name>GTP</name>
        <dbReference type="ChEBI" id="CHEBI:37565"/>
    </ligand>
</feature>
<feature type="binding site" evidence="2">
    <location>
        <begin position="425"/>
        <end position="427"/>
    </location>
    <ligand>
        <name>GTP</name>
        <dbReference type="ChEBI" id="CHEBI:37565"/>
    </ligand>
</feature>
<feature type="strand" evidence="7">
    <location>
        <begin position="16"/>
        <end position="25"/>
    </location>
</feature>
<feature type="helix" evidence="7">
    <location>
        <begin position="29"/>
        <end position="36"/>
    </location>
</feature>
<feature type="helix" evidence="7">
    <location>
        <begin position="37"/>
        <end position="39"/>
    </location>
</feature>
<feature type="strand" evidence="7">
    <location>
        <begin position="41"/>
        <end position="45"/>
    </location>
</feature>
<feature type="strand" evidence="7">
    <location>
        <begin position="54"/>
        <end position="58"/>
    </location>
</feature>
<feature type="strand" evidence="7">
    <location>
        <begin position="61"/>
        <end position="68"/>
    </location>
</feature>
<feature type="turn" evidence="7">
    <location>
        <begin position="70"/>
        <end position="73"/>
    </location>
</feature>
<feature type="strand" evidence="7">
    <location>
        <begin position="78"/>
        <end position="81"/>
    </location>
</feature>
<feature type="helix" evidence="7">
    <location>
        <begin position="89"/>
        <end position="99"/>
    </location>
</feature>
<feature type="helix" evidence="7">
    <location>
        <begin position="103"/>
        <end position="106"/>
    </location>
</feature>
<feature type="strand" evidence="7">
    <location>
        <begin position="107"/>
        <end position="110"/>
    </location>
</feature>
<feature type="strand" evidence="7">
    <location>
        <begin position="113"/>
        <end position="115"/>
    </location>
</feature>
<feature type="helix" evidence="7">
    <location>
        <begin position="118"/>
        <end position="133"/>
    </location>
</feature>
<feature type="strand" evidence="7">
    <location>
        <begin position="142"/>
        <end position="144"/>
    </location>
</feature>
<feature type="helix" evidence="7">
    <location>
        <begin position="145"/>
        <end position="153"/>
    </location>
</feature>
<feature type="helix" evidence="7">
    <location>
        <begin position="160"/>
        <end position="164"/>
    </location>
</feature>
<feature type="helix" evidence="7">
    <location>
        <begin position="166"/>
        <end position="183"/>
    </location>
</feature>
<feature type="helix" evidence="7">
    <location>
        <begin position="191"/>
        <end position="205"/>
    </location>
</feature>
<feature type="helix" evidence="7">
    <location>
        <begin position="206"/>
        <end position="208"/>
    </location>
</feature>
<feature type="helix" evidence="7">
    <location>
        <begin position="212"/>
        <end position="221"/>
    </location>
</feature>
<feature type="strand" evidence="7">
    <location>
        <begin position="226"/>
        <end position="229"/>
    </location>
</feature>
<feature type="helix" evidence="7">
    <location>
        <begin position="234"/>
        <end position="236"/>
    </location>
</feature>
<feature type="turn" evidence="7">
    <location>
        <begin position="238"/>
        <end position="240"/>
    </location>
</feature>
<feature type="helix" evidence="7">
    <location>
        <begin position="253"/>
        <end position="258"/>
    </location>
</feature>
<feature type="turn" evidence="7">
    <location>
        <begin position="259"/>
        <end position="261"/>
    </location>
</feature>
<feature type="helix" evidence="7">
    <location>
        <begin position="264"/>
        <end position="266"/>
    </location>
</feature>
<feature type="strand" evidence="7">
    <location>
        <begin position="269"/>
        <end position="280"/>
    </location>
</feature>
<feature type="strand" evidence="7">
    <location>
        <begin position="282"/>
        <end position="284"/>
    </location>
</feature>
<feature type="helix" evidence="7">
    <location>
        <begin position="293"/>
        <end position="301"/>
    </location>
</feature>
<feature type="turn" evidence="7">
    <location>
        <begin position="307"/>
        <end position="309"/>
    </location>
</feature>
<feature type="strand" evidence="7">
    <location>
        <begin position="314"/>
        <end position="316"/>
    </location>
</feature>
<feature type="helix" evidence="7">
    <location>
        <begin position="320"/>
        <end position="330"/>
    </location>
</feature>
<feature type="strand" evidence="7">
    <location>
        <begin position="333"/>
        <end position="338"/>
    </location>
</feature>
<feature type="helix" evidence="7">
    <location>
        <begin position="340"/>
        <end position="343"/>
    </location>
</feature>
<feature type="strand" evidence="7">
    <location>
        <begin position="347"/>
        <end position="357"/>
    </location>
</feature>
<feature type="turn" evidence="7">
    <location>
        <begin position="358"/>
        <end position="360"/>
    </location>
</feature>
<feature type="helix" evidence="7">
    <location>
        <begin position="373"/>
        <end position="376"/>
    </location>
</feature>
<feature type="strand" evidence="7">
    <location>
        <begin position="379"/>
        <end position="387"/>
    </location>
</feature>
<feature type="helix" evidence="7">
    <location>
        <begin position="399"/>
        <end position="401"/>
    </location>
</feature>
<feature type="helix" evidence="7">
    <location>
        <begin position="404"/>
        <end position="417"/>
    </location>
</feature>
<feature type="strand" evidence="7">
    <location>
        <begin position="421"/>
        <end position="425"/>
    </location>
</feature>
<feature type="strand" evidence="7">
    <location>
        <begin position="427"/>
        <end position="429"/>
    </location>
</feature>
<feature type="strand" evidence="7">
    <location>
        <begin position="433"/>
        <end position="435"/>
    </location>
</feature>
<sequence>MNIFDHQIKNVDKGNVVAILGAQWGDEGKGKIIDMLSEYSDITCRFNGGANAGHTISVNDKKYALHLLPCGVLYDNNISVLGNGMVIHVKSLMEEIESVGGKLLDRLYLSNKAHILFDIHQIIDSIQETKKLKEGKQIGTTKRGIGPCYSTKASRIGIRLGTLKNFENFKNMYSKLIDHLMDLYNITEYDKEKELNLFYNYHIKLRDRIVDVISFMNTNLENNKKVLIEGANAAMLDIDFGTYPYVTSSCTTVGGVFSGLGIHHKKLNLVVGVVKSYLTRVGCGPFLTELNNDVGQYLREKGHEYGTTTKRPRRCGWLDIPMLLYVKCINSIDMINLTKLDVLSGLEEILLCVNFKNKKTGELLEKGCYPVEEEISEEYEPVYEKFSGWKEDISTCNEFDELPENAKKYILAIEKYLKTPIVWIGVGPNRKNMIVKKNFNLN</sequence>
<protein>
    <recommendedName>
        <fullName evidence="2">Adenylosuccinate synthetase</fullName>
        <shortName evidence="2">AMPSase</shortName>
        <shortName evidence="2">AdSS</shortName>
        <ecNumber evidence="2">6.3.4.4</ecNumber>
    </recommendedName>
    <alternativeName>
        <fullName evidence="2">IMP--aspartate ligase</fullName>
    </alternativeName>
</protein>
<keyword id="KW-0002">3D-structure</keyword>
<keyword id="KW-0963">Cytoplasm</keyword>
<keyword id="KW-0342">GTP-binding</keyword>
<keyword id="KW-0436">Ligase</keyword>
<keyword id="KW-0460">Magnesium</keyword>
<keyword id="KW-0479">Metal-binding</keyword>
<keyword id="KW-0547">Nucleotide-binding</keyword>
<keyword id="KW-0658">Purine biosynthesis</keyword>
<accession>Q9U8D3</accession>
<comment type="function">
    <text evidence="1 3 4 5">Plays an important role in the salvage pathway for purine nucleotide biosynthesis. Catalyzes the first committed step in the biosynthesis of AMP from IMP (By similarity).</text>
</comment>
<comment type="catalytic activity">
    <reaction evidence="2">
        <text>IMP + L-aspartate + GTP = N(6)-(1,2-dicarboxyethyl)-AMP + GDP + phosphate + 2 H(+)</text>
        <dbReference type="Rhea" id="RHEA:15753"/>
        <dbReference type="ChEBI" id="CHEBI:15378"/>
        <dbReference type="ChEBI" id="CHEBI:29991"/>
        <dbReference type="ChEBI" id="CHEBI:37565"/>
        <dbReference type="ChEBI" id="CHEBI:43474"/>
        <dbReference type="ChEBI" id="CHEBI:57567"/>
        <dbReference type="ChEBI" id="CHEBI:58053"/>
        <dbReference type="ChEBI" id="CHEBI:58189"/>
        <dbReference type="EC" id="6.3.4.4"/>
    </reaction>
</comment>
<comment type="cofactor">
    <cofactor evidence="2">
        <name>Mg(2+)</name>
        <dbReference type="ChEBI" id="CHEBI:18420"/>
    </cofactor>
    <text evidence="2">Binds 1 Mg(2+) ion per subunit.</text>
</comment>
<comment type="activity regulation">
    <text evidence="4 6">Inhibited by hadacidin. Activated by fructose 1,6-bisphosphate.</text>
</comment>
<comment type="biophysicochemical properties">
    <kinetics>
        <KM evidence="4 6">18.4 uM for GTP</KM>
        <KM evidence="4 6">23 uM for IMP</KM>
        <KM evidence="4 6">1800 uM for L-aspartate</KM>
    </kinetics>
    <phDependence>
        <text evidence="4 6">Optimum pH is 6.8-7.5.</text>
    </phDependence>
</comment>
<comment type="pathway">
    <text evidence="2">Purine metabolism; AMP biosynthesis via de novo pathway; AMP from IMP: step 1/2.</text>
</comment>
<comment type="subunit">
    <text evidence="2">Homodimer.</text>
</comment>
<comment type="subcellular location">
    <subcellularLocation>
        <location evidence="2">Cytoplasm</location>
    </subcellularLocation>
</comment>
<comment type="miscellaneous">
    <text>Parasitic protozoa lack the de novo purine biosynthesis pathway and rely exclusively on the salvage pathway for their purine nucleotide requirements.</text>
</comment>
<comment type="similarity">
    <text evidence="2">Belongs to the adenylosuccinate synthetase family.</text>
</comment>
<reference key="1">
    <citation type="journal article" date="2002" name="Protein Expr. Purif.">
        <title>Purification and characterization of recombinant Plasmodium falciparum adenylosuccinate synthetase expressed in Escherichia coli.</title>
        <authorList>
            <person name="Jayalakshmi R."/>
            <person name="Sumathy K."/>
            <person name="Balaram H."/>
        </authorList>
    </citation>
    <scope>NUCLEOTIDE SEQUENCE [GENOMIC DNA]</scope>
    <scope>FUNCTION</scope>
    <source>
        <strain>T9/106</strain>
    </source>
</reference>
<reference key="2">
    <citation type="journal article" date="2000" name="Curr. Sci.">
        <title>Cloning and characterization of the Plasmodium falciparum adenylosuccinate synthetase gene.</title>
        <authorList>
            <person name="Sumathy K."/>
            <person name="Jayalakshmi R."/>
            <person name="Shivayogi M.S."/>
            <person name="Balaram H."/>
        </authorList>
    </citation>
    <scope>NUCLEOTIDE SEQUENCE [MRNA] OF 3-442</scope>
    <scope>BIOPHYSICOCHEMICAL PROPERTIES</scope>
    <scope>SUBUNIT</scope>
    <scope>ACTIVITY REGULATION</scope>
    <source>
        <strain>T9/106</strain>
    </source>
</reference>
<reference key="3">
    <citation type="journal article" date="2004" name="Mol. Biochem. Parasitol.">
        <title>Unique kinetic mechanism of Plasmodium falciparum adenylosuccinate synthetase.</title>
        <authorList>
            <person name="Raman J."/>
            <person name="Mehrotra S."/>
            <person name="Anand R.P."/>
            <person name="Balaram H."/>
        </authorList>
    </citation>
    <scope>FUNCTION</scope>
    <scope>ACTIVITY REGULATION</scope>
    <scope>BIOPHYSICOCHEMICAL PROPERTIES</scope>
    <source>
        <strain>T9/106</strain>
    </source>
</reference>
<reference key="4">
    <citation type="journal article" date="2010" name="Biochim. Biophys. Acta">
        <title>Studies on active site mutants of P. falciparum adenylosuccinate synthetase: Insights into enzyme catalysis and activation.</title>
        <authorList>
            <person name="Mehrotra S."/>
            <person name="Mylarappa B.N."/>
            <person name="Iyengar P."/>
            <person name="Balaram H."/>
        </authorList>
    </citation>
    <scope>FUNCTION</scope>
</reference>
<reference key="5">
    <citation type="journal article" date="2004" name="J. Mol. Biol.">
        <title>Crystal structure of fully ligated adenylosuccinate synthetase from Plasmodium falciparum.</title>
        <authorList>
            <person name="Eaazhisai K."/>
            <person name="Jayalakshmi R."/>
            <person name="Gayathri P."/>
            <person name="Anand R.P."/>
            <person name="Sumathy K."/>
            <person name="Balaram H."/>
            <person name="Murthy M.R."/>
        </authorList>
    </citation>
    <scope>X-RAY CRYSTALLOGRAPHY (2.0 ANGSTROMS) OF 3-442 IN COMPLEX WITH IMP; GDP; MAGNESIUM AND SUBSTRATE ANALOG</scope>
    <source>
        <strain>T9/106</strain>
    </source>
</reference>
<name>PURA_PLAFA</name>
<proteinExistence type="evidence at protein level"/>